<proteinExistence type="inferred from homology"/>
<sequence>MLKVVLITGISGSGKSVALRMLEDAGYTCIDNLPVRFLSEFVAGARDDGLERVAIAIDVRSPGELAELPGVITAMRAMGTSLRVVFLDANTHTLAQRYSESRRRHPLTDRLSRGGQTPSLLDCIALERDLLAPLRDQEHVIDTSDLTPGQLRAWIRDLVQADRPPLVLTFESFAYKRGVPSDADLVFDVRCLPNPYYDRTLRPLTGRDEPVATWLAGFEIVGQMIDDIAGYLRRWLPQYTQDTRNYLTVAIGCTGGQHRSVYVVEQLALRFAEHDPLLVRHRTQLPDEST</sequence>
<protein>
    <recommendedName>
        <fullName evidence="1">Nucleotide-binding protein Bpet0443</fullName>
    </recommendedName>
</protein>
<name>Y443_BORPD</name>
<dbReference type="EMBL" id="AM902716">
    <property type="protein sequence ID" value="CAP40775.1"/>
    <property type="status" value="ALT_INIT"/>
    <property type="molecule type" value="Genomic_DNA"/>
</dbReference>
<dbReference type="SMR" id="A9I0N5"/>
<dbReference type="STRING" id="94624.Bpet0443"/>
<dbReference type="KEGG" id="bpt:Bpet0443"/>
<dbReference type="eggNOG" id="COG1660">
    <property type="taxonomic scope" value="Bacteria"/>
</dbReference>
<dbReference type="Proteomes" id="UP000001225">
    <property type="component" value="Chromosome"/>
</dbReference>
<dbReference type="GO" id="GO:0005524">
    <property type="term" value="F:ATP binding"/>
    <property type="evidence" value="ECO:0007669"/>
    <property type="project" value="UniProtKB-UniRule"/>
</dbReference>
<dbReference type="GO" id="GO:0005525">
    <property type="term" value="F:GTP binding"/>
    <property type="evidence" value="ECO:0007669"/>
    <property type="project" value="UniProtKB-UniRule"/>
</dbReference>
<dbReference type="Gene3D" id="3.40.50.300">
    <property type="entry name" value="P-loop containing nucleotide triphosphate hydrolases"/>
    <property type="match status" value="1"/>
</dbReference>
<dbReference type="HAMAP" id="MF_00636">
    <property type="entry name" value="RapZ_like"/>
    <property type="match status" value="1"/>
</dbReference>
<dbReference type="InterPro" id="IPR027417">
    <property type="entry name" value="P-loop_NTPase"/>
</dbReference>
<dbReference type="InterPro" id="IPR005337">
    <property type="entry name" value="RapZ-like"/>
</dbReference>
<dbReference type="InterPro" id="IPR053930">
    <property type="entry name" value="RapZ-like_N"/>
</dbReference>
<dbReference type="InterPro" id="IPR053931">
    <property type="entry name" value="RapZ_C"/>
</dbReference>
<dbReference type="NCBIfam" id="NF003828">
    <property type="entry name" value="PRK05416.1"/>
    <property type="match status" value="1"/>
</dbReference>
<dbReference type="PANTHER" id="PTHR30448">
    <property type="entry name" value="RNASE ADAPTER PROTEIN RAPZ"/>
    <property type="match status" value="1"/>
</dbReference>
<dbReference type="PANTHER" id="PTHR30448:SF0">
    <property type="entry name" value="RNASE ADAPTER PROTEIN RAPZ"/>
    <property type="match status" value="1"/>
</dbReference>
<dbReference type="Pfam" id="PF22740">
    <property type="entry name" value="PapZ_C"/>
    <property type="match status" value="1"/>
</dbReference>
<dbReference type="Pfam" id="PF03668">
    <property type="entry name" value="RapZ-like_N"/>
    <property type="match status" value="1"/>
</dbReference>
<dbReference type="PIRSF" id="PIRSF005052">
    <property type="entry name" value="P-loopkin"/>
    <property type="match status" value="1"/>
</dbReference>
<dbReference type="SUPFAM" id="SSF52540">
    <property type="entry name" value="P-loop containing nucleoside triphosphate hydrolases"/>
    <property type="match status" value="1"/>
</dbReference>
<organism>
    <name type="scientific">Bordetella petrii (strain ATCC BAA-461 / DSM 12804 / CCUG 43448)</name>
    <dbReference type="NCBI Taxonomy" id="340100"/>
    <lineage>
        <taxon>Bacteria</taxon>
        <taxon>Pseudomonadati</taxon>
        <taxon>Pseudomonadota</taxon>
        <taxon>Betaproteobacteria</taxon>
        <taxon>Burkholderiales</taxon>
        <taxon>Alcaligenaceae</taxon>
        <taxon>Bordetella</taxon>
    </lineage>
</organism>
<gene>
    <name type="ordered locus">Bpet0443</name>
</gene>
<evidence type="ECO:0000255" key="1">
    <source>
        <dbReference type="HAMAP-Rule" id="MF_00636"/>
    </source>
</evidence>
<evidence type="ECO:0000305" key="2"/>
<reference key="1">
    <citation type="journal article" date="2008" name="BMC Genomics">
        <title>The missing link: Bordetella petrii is endowed with both the metabolic versatility of environmental bacteria and virulence traits of pathogenic Bordetellae.</title>
        <authorList>
            <person name="Gross R."/>
            <person name="Guzman C.A."/>
            <person name="Sebaihia M."/>
            <person name="Martin dos Santos V.A.P."/>
            <person name="Pieper D.H."/>
            <person name="Koebnik R."/>
            <person name="Lechner M."/>
            <person name="Bartels D."/>
            <person name="Buhrmester J."/>
            <person name="Choudhuri J.V."/>
            <person name="Ebensen T."/>
            <person name="Gaigalat L."/>
            <person name="Herrmann S."/>
            <person name="Khachane A.N."/>
            <person name="Larisch C."/>
            <person name="Link S."/>
            <person name="Linke B."/>
            <person name="Meyer F."/>
            <person name="Mormann S."/>
            <person name="Nakunst D."/>
            <person name="Rueckert C."/>
            <person name="Schneiker-Bekel S."/>
            <person name="Schulze K."/>
            <person name="Voerholter F.-J."/>
            <person name="Yevsa T."/>
            <person name="Engle J.T."/>
            <person name="Goldman W.E."/>
            <person name="Puehler A."/>
            <person name="Goebel U.B."/>
            <person name="Goesmann A."/>
            <person name="Bloecker H."/>
            <person name="Kaiser O."/>
            <person name="Martinez-Arias R."/>
        </authorList>
    </citation>
    <scope>NUCLEOTIDE SEQUENCE [LARGE SCALE GENOMIC DNA]</scope>
    <source>
        <strain>ATCC BAA-461 / DSM 12804 / CCUG 43448</strain>
    </source>
</reference>
<accession>A9I0N5</accession>
<feature type="chain" id="PRO_0000383220" description="Nucleotide-binding protein Bpet0443">
    <location>
        <begin position="1"/>
        <end position="290"/>
    </location>
</feature>
<feature type="binding site" evidence="1">
    <location>
        <begin position="9"/>
        <end position="16"/>
    </location>
    <ligand>
        <name>ATP</name>
        <dbReference type="ChEBI" id="CHEBI:30616"/>
    </ligand>
</feature>
<feature type="binding site" evidence="1">
    <location>
        <begin position="58"/>
        <end position="61"/>
    </location>
    <ligand>
        <name>GTP</name>
        <dbReference type="ChEBI" id="CHEBI:37565"/>
    </ligand>
</feature>
<comment type="function">
    <text evidence="1">Displays ATPase and GTPase activities.</text>
</comment>
<comment type="similarity">
    <text evidence="1">Belongs to the RapZ-like family.</text>
</comment>
<comment type="sequence caution" evidence="2">
    <conflict type="erroneous initiation">
        <sequence resource="EMBL-CDS" id="CAP40775"/>
    </conflict>
</comment>
<keyword id="KW-0067">ATP-binding</keyword>
<keyword id="KW-0342">GTP-binding</keyword>
<keyword id="KW-0547">Nucleotide-binding</keyword>